<accession>A5USR6</accession>
<evidence type="ECO:0000255" key="1">
    <source>
        <dbReference type="HAMAP-Rule" id="MF_01322"/>
    </source>
</evidence>
<evidence type="ECO:0000256" key="2">
    <source>
        <dbReference type="SAM" id="MobiDB-lite"/>
    </source>
</evidence>
<comment type="function">
    <text evidence="1">DNA-dependent RNA polymerase catalyzes the transcription of DNA into RNA using the four ribonucleoside triphosphates as substrates.</text>
</comment>
<comment type="catalytic activity">
    <reaction evidence="1">
        <text>RNA(n) + a ribonucleoside 5'-triphosphate = RNA(n+1) + diphosphate</text>
        <dbReference type="Rhea" id="RHEA:21248"/>
        <dbReference type="Rhea" id="RHEA-COMP:14527"/>
        <dbReference type="Rhea" id="RHEA-COMP:17342"/>
        <dbReference type="ChEBI" id="CHEBI:33019"/>
        <dbReference type="ChEBI" id="CHEBI:61557"/>
        <dbReference type="ChEBI" id="CHEBI:140395"/>
        <dbReference type="EC" id="2.7.7.6"/>
    </reaction>
</comment>
<comment type="cofactor">
    <cofactor evidence="1">
        <name>Mg(2+)</name>
        <dbReference type="ChEBI" id="CHEBI:18420"/>
    </cofactor>
    <text evidence="1">Binds 1 Mg(2+) ion per subunit.</text>
</comment>
<comment type="cofactor">
    <cofactor evidence="1">
        <name>Zn(2+)</name>
        <dbReference type="ChEBI" id="CHEBI:29105"/>
    </cofactor>
    <text evidence="1">Binds 2 Zn(2+) ions per subunit.</text>
</comment>
<comment type="subunit">
    <text evidence="1">The RNAP catalytic core consists of 2 alpha, 1 beta, 1 beta' and 1 omega subunit. When a sigma factor is associated with the core the holoenzyme is formed, which can initiate transcription.</text>
</comment>
<comment type="similarity">
    <text evidence="1">Belongs to the RNA polymerase beta' chain family.</text>
</comment>
<gene>
    <name evidence="1" type="primary">rpoC</name>
    <name type="ordered locus">RoseRS_1264</name>
</gene>
<reference key="1">
    <citation type="submission" date="2007-04" db="EMBL/GenBank/DDBJ databases">
        <title>Complete sequence of Roseiflexus sp. RS-1.</title>
        <authorList>
            <consortium name="US DOE Joint Genome Institute"/>
            <person name="Copeland A."/>
            <person name="Lucas S."/>
            <person name="Lapidus A."/>
            <person name="Barry K."/>
            <person name="Detter J.C."/>
            <person name="Glavina del Rio T."/>
            <person name="Hammon N."/>
            <person name="Israni S."/>
            <person name="Dalin E."/>
            <person name="Tice H."/>
            <person name="Pitluck S."/>
            <person name="Chertkov O."/>
            <person name="Brettin T."/>
            <person name="Bruce D."/>
            <person name="Han C."/>
            <person name="Schmutz J."/>
            <person name="Larimer F."/>
            <person name="Land M."/>
            <person name="Hauser L."/>
            <person name="Kyrpides N."/>
            <person name="Mikhailova N."/>
            <person name="Bryant D.A."/>
            <person name="Richardson P."/>
        </authorList>
    </citation>
    <scope>NUCLEOTIDE SEQUENCE [LARGE SCALE GENOMIC DNA]</scope>
    <source>
        <strain>RS-1</strain>
    </source>
</reference>
<sequence length="1504" mass="169331">MLEINDFSAIRISLASPEDILSWSHGEVTKPETINYRTLKPERDGLFCERIFGPTKDWECYCGKYKRVRYKGVVCDKCGVEVTRSKVRRERMGHISLASPVSHIWFVKGTPSRLGLLLDISPRNLERVLYFASYMIVHVDEELKAQAREALQAEYREKRERIQQEAESKQIELSTQLTQDLGGMESAQITTQRRIEEEYRRLRDEISAEAERLRSDLEEKQGEAAEEDILFRGTVLIEEGEIITEKTLDALDELLDQELETLEQRKQRDLEDAEQLTGAERERKEYEASQERERLQERLQSELDRLVREEKERLEQIDSIKLKRILSEQEYRALREIAPGVFRADMGAGAVRDMIVRTIDLDKLAEELQNEVYTTQGQRRKKATKRLRVVEAFRKSGNRPEWMILTVLPVIPPDLRPMVQLDGGRFATSDLNDLYRRVINRNNRLKRLMELNAPEIIVRNEKRMLQEAVDALIDNGRRGRAVSGKGKHRLKSLSDMLKGKQGRFRQNLLGKRVDYSGRSVIVVGPDLKLHQCGLPKKMALELFKPFVMRRLVEKGFAHNIKSAKRIVERVRPEVWDVLEEVIKDYLVLLNRAPSLHRLSIQAFEAKLIEGSAIQLHPLVCAAFNADFDGDQMAVHVPLSRKAQEEARMRMLSKYNLLSPATGDPIITPSQDIVLGCYYLTMVKDGAKGSGKMFASIDEALLAYDKGLIDIQAPIFVRMTGTVYGESDRPVRMLSPDENGAPRMLLETTIGRIIFNNELLEPLRFRNRLIAKKGLREIIADCYKYYTNLNNLTEADLDTIRAMYGDRPRDDLARYFGSEMTASQADRIKTLGFRYATRGGMTIGVDDIEIPPKKQDILAEAEKRVTEVERQFRRGLITEEERYREIVEIWQNATKQTTEAVKQHLNPFGPVAMMVNSAARGNINQLSQMAGMRGLMSDPTGRIIELPIKSNFREGLSVLEYFVSTHGGRKGLADTALRTADAGYLTRRLIDVAQDNIVTIDDCGTDEGLWIYRADDREVLQDFEQRILGRLLAAPLVDPRTGEILANRNDEIDEALVRKCKELAIDAVYVRSPLACKADYGICRMCYGRNLATGKLVDIGEAVGIIAAQSIGEPGTQLTLRTFHTGGVASADDITQGLPRVQEIFEARTPKGKAILAEIDGIVELVREDEVRKIRVVATELYTDDHELPPHYEPVVADGAQVNEGDVLAQSNRADLNGEPIVARIAGVVRIGAGQISVINEEREVREVVAPHTARLAPGIENGARVVAGQHLTEGSADPQELLALQGREAVQRYLVNEAQKVYRSQGVDINDKHIEVIVRQMLRRVRIEEPGDTDYLPGELIDSTEFVRKNAEIISQGGEPATASTMLLGITKASLTTDSFLAAASFQETTRVLTEAAITGKVDYLRGLKENVVIGKLIPAGTGIEKRRQLAEEIIGELANVAPATSTAVVEQERPDREADEALRRRLRALIGGDGDDGERNNGDFDDQVGEDVVIPPDDDDQEA</sequence>
<dbReference type="EC" id="2.7.7.6" evidence="1"/>
<dbReference type="EMBL" id="CP000686">
    <property type="protein sequence ID" value="ABQ89669.1"/>
    <property type="molecule type" value="Genomic_DNA"/>
</dbReference>
<dbReference type="RefSeq" id="WP_011956021.1">
    <property type="nucleotide sequence ID" value="NC_009523.1"/>
</dbReference>
<dbReference type="SMR" id="A5USR6"/>
<dbReference type="STRING" id="357808.RoseRS_1264"/>
<dbReference type="KEGG" id="rrs:RoseRS_1264"/>
<dbReference type="eggNOG" id="COG0086">
    <property type="taxonomic scope" value="Bacteria"/>
</dbReference>
<dbReference type="HOGENOM" id="CLU_000524_3_1_0"/>
<dbReference type="OrthoDB" id="9815296at2"/>
<dbReference type="Proteomes" id="UP000006554">
    <property type="component" value="Chromosome"/>
</dbReference>
<dbReference type="GO" id="GO:0000428">
    <property type="term" value="C:DNA-directed RNA polymerase complex"/>
    <property type="evidence" value="ECO:0007669"/>
    <property type="project" value="UniProtKB-KW"/>
</dbReference>
<dbReference type="GO" id="GO:0003677">
    <property type="term" value="F:DNA binding"/>
    <property type="evidence" value="ECO:0007669"/>
    <property type="project" value="UniProtKB-UniRule"/>
</dbReference>
<dbReference type="GO" id="GO:0003899">
    <property type="term" value="F:DNA-directed RNA polymerase activity"/>
    <property type="evidence" value="ECO:0007669"/>
    <property type="project" value="UniProtKB-UniRule"/>
</dbReference>
<dbReference type="GO" id="GO:0000287">
    <property type="term" value="F:magnesium ion binding"/>
    <property type="evidence" value="ECO:0007669"/>
    <property type="project" value="UniProtKB-UniRule"/>
</dbReference>
<dbReference type="GO" id="GO:0008270">
    <property type="term" value="F:zinc ion binding"/>
    <property type="evidence" value="ECO:0007669"/>
    <property type="project" value="UniProtKB-UniRule"/>
</dbReference>
<dbReference type="GO" id="GO:0006351">
    <property type="term" value="P:DNA-templated transcription"/>
    <property type="evidence" value="ECO:0007669"/>
    <property type="project" value="UniProtKB-UniRule"/>
</dbReference>
<dbReference type="CDD" id="cd02655">
    <property type="entry name" value="RNAP_beta'_C"/>
    <property type="match status" value="1"/>
</dbReference>
<dbReference type="CDD" id="cd01609">
    <property type="entry name" value="RNAP_beta'_N"/>
    <property type="match status" value="1"/>
</dbReference>
<dbReference type="FunFam" id="1.10.40.90:FF:000001">
    <property type="entry name" value="DNA-directed RNA polymerase subunit beta"/>
    <property type="match status" value="1"/>
</dbReference>
<dbReference type="FunFam" id="4.10.860.120:FF:000001">
    <property type="entry name" value="DNA-directed RNA polymerase subunit beta"/>
    <property type="match status" value="1"/>
</dbReference>
<dbReference type="Gene3D" id="1.10.132.30">
    <property type="match status" value="1"/>
</dbReference>
<dbReference type="Gene3D" id="1.10.150.390">
    <property type="match status" value="1"/>
</dbReference>
<dbReference type="Gene3D" id="1.10.1790.20">
    <property type="match status" value="2"/>
</dbReference>
<dbReference type="Gene3D" id="1.10.40.90">
    <property type="match status" value="1"/>
</dbReference>
<dbReference type="Gene3D" id="2.40.40.20">
    <property type="match status" value="1"/>
</dbReference>
<dbReference type="Gene3D" id="2.40.50.100">
    <property type="match status" value="2"/>
</dbReference>
<dbReference type="Gene3D" id="4.10.860.120">
    <property type="entry name" value="RNA polymerase II, clamp domain"/>
    <property type="match status" value="1"/>
</dbReference>
<dbReference type="Gene3D" id="1.10.274.100">
    <property type="entry name" value="RNA polymerase Rpb1, domain 3"/>
    <property type="match status" value="1"/>
</dbReference>
<dbReference type="HAMAP" id="MF_01322">
    <property type="entry name" value="RNApol_bact_RpoC"/>
    <property type="match status" value="1"/>
</dbReference>
<dbReference type="InterPro" id="IPR045867">
    <property type="entry name" value="DNA-dir_RpoC_beta_prime"/>
</dbReference>
<dbReference type="InterPro" id="IPR012754">
    <property type="entry name" value="DNA-dir_RpoC_beta_prime_bact"/>
</dbReference>
<dbReference type="InterPro" id="IPR000722">
    <property type="entry name" value="RNA_pol_asu"/>
</dbReference>
<dbReference type="InterPro" id="IPR006592">
    <property type="entry name" value="RNA_pol_N"/>
</dbReference>
<dbReference type="InterPro" id="IPR007080">
    <property type="entry name" value="RNA_pol_Rpb1_1"/>
</dbReference>
<dbReference type="InterPro" id="IPR007066">
    <property type="entry name" value="RNA_pol_Rpb1_3"/>
</dbReference>
<dbReference type="InterPro" id="IPR042102">
    <property type="entry name" value="RNA_pol_Rpb1_3_sf"/>
</dbReference>
<dbReference type="InterPro" id="IPR007083">
    <property type="entry name" value="RNA_pol_Rpb1_4"/>
</dbReference>
<dbReference type="InterPro" id="IPR007081">
    <property type="entry name" value="RNA_pol_Rpb1_5"/>
</dbReference>
<dbReference type="InterPro" id="IPR044893">
    <property type="entry name" value="RNA_pol_Rpb1_clamp_domain"/>
</dbReference>
<dbReference type="InterPro" id="IPR038120">
    <property type="entry name" value="Rpb1_funnel_sf"/>
</dbReference>
<dbReference type="PANTHER" id="PTHR19376">
    <property type="entry name" value="DNA-DIRECTED RNA POLYMERASE"/>
    <property type="match status" value="1"/>
</dbReference>
<dbReference type="PANTHER" id="PTHR19376:SF54">
    <property type="entry name" value="DNA-DIRECTED RNA POLYMERASE SUBUNIT BETA"/>
    <property type="match status" value="1"/>
</dbReference>
<dbReference type="Pfam" id="PF04997">
    <property type="entry name" value="RNA_pol_Rpb1_1"/>
    <property type="match status" value="1"/>
</dbReference>
<dbReference type="Pfam" id="PF00623">
    <property type="entry name" value="RNA_pol_Rpb1_2"/>
    <property type="match status" value="2"/>
</dbReference>
<dbReference type="Pfam" id="PF04983">
    <property type="entry name" value="RNA_pol_Rpb1_3"/>
    <property type="match status" value="1"/>
</dbReference>
<dbReference type="Pfam" id="PF05000">
    <property type="entry name" value="RNA_pol_Rpb1_4"/>
    <property type="match status" value="1"/>
</dbReference>
<dbReference type="Pfam" id="PF04998">
    <property type="entry name" value="RNA_pol_Rpb1_5"/>
    <property type="match status" value="1"/>
</dbReference>
<dbReference type="SMART" id="SM00663">
    <property type="entry name" value="RPOLA_N"/>
    <property type="match status" value="1"/>
</dbReference>
<dbReference type="SUPFAM" id="SSF64484">
    <property type="entry name" value="beta and beta-prime subunits of DNA dependent RNA-polymerase"/>
    <property type="match status" value="1"/>
</dbReference>
<name>RPOC_ROSS1</name>
<proteinExistence type="inferred from homology"/>
<feature type="chain" id="PRO_1000086411" description="DNA-directed RNA polymerase subunit beta'">
    <location>
        <begin position="1"/>
        <end position="1504"/>
    </location>
</feature>
<feature type="region of interest" description="Disordered" evidence="2">
    <location>
        <begin position="265"/>
        <end position="294"/>
    </location>
</feature>
<feature type="region of interest" description="Disordered" evidence="2">
    <location>
        <begin position="1468"/>
        <end position="1504"/>
    </location>
</feature>
<feature type="compositionally biased region" description="Basic and acidic residues" evidence="2">
    <location>
        <begin position="279"/>
        <end position="294"/>
    </location>
</feature>
<feature type="binding site" evidence="1">
    <location>
        <position position="60"/>
    </location>
    <ligand>
        <name>Zn(2+)</name>
        <dbReference type="ChEBI" id="CHEBI:29105"/>
        <label>1</label>
    </ligand>
</feature>
<feature type="binding site" evidence="1">
    <location>
        <position position="62"/>
    </location>
    <ligand>
        <name>Zn(2+)</name>
        <dbReference type="ChEBI" id="CHEBI:29105"/>
        <label>1</label>
    </ligand>
</feature>
<feature type="binding site" evidence="1">
    <location>
        <position position="75"/>
    </location>
    <ligand>
        <name>Zn(2+)</name>
        <dbReference type="ChEBI" id="CHEBI:29105"/>
        <label>1</label>
    </ligand>
</feature>
<feature type="binding site" evidence="1">
    <location>
        <position position="78"/>
    </location>
    <ligand>
        <name>Zn(2+)</name>
        <dbReference type="ChEBI" id="CHEBI:29105"/>
        <label>1</label>
    </ligand>
</feature>
<feature type="binding site" evidence="1">
    <location>
        <position position="626"/>
    </location>
    <ligand>
        <name>Mg(2+)</name>
        <dbReference type="ChEBI" id="CHEBI:18420"/>
    </ligand>
</feature>
<feature type="binding site" evidence="1">
    <location>
        <position position="628"/>
    </location>
    <ligand>
        <name>Mg(2+)</name>
        <dbReference type="ChEBI" id="CHEBI:18420"/>
    </ligand>
</feature>
<feature type="binding site" evidence="1">
    <location>
        <position position="630"/>
    </location>
    <ligand>
        <name>Mg(2+)</name>
        <dbReference type="ChEBI" id="CHEBI:18420"/>
    </ligand>
</feature>
<feature type="binding site" evidence="1">
    <location>
        <position position="1002"/>
    </location>
    <ligand>
        <name>Zn(2+)</name>
        <dbReference type="ChEBI" id="CHEBI:29105"/>
        <label>2</label>
    </ligand>
</feature>
<feature type="binding site" evidence="1">
    <location>
        <position position="1075"/>
    </location>
    <ligand>
        <name>Zn(2+)</name>
        <dbReference type="ChEBI" id="CHEBI:29105"/>
        <label>2</label>
    </ligand>
</feature>
<feature type="binding site" evidence="1">
    <location>
        <position position="1082"/>
    </location>
    <ligand>
        <name>Zn(2+)</name>
        <dbReference type="ChEBI" id="CHEBI:29105"/>
        <label>2</label>
    </ligand>
</feature>
<feature type="binding site" evidence="1">
    <location>
        <position position="1085"/>
    </location>
    <ligand>
        <name>Zn(2+)</name>
        <dbReference type="ChEBI" id="CHEBI:29105"/>
        <label>2</label>
    </ligand>
</feature>
<protein>
    <recommendedName>
        <fullName evidence="1">DNA-directed RNA polymerase subunit beta'</fullName>
        <shortName evidence="1">RNAP subunit beta'</shortName>
        <ecNumber evidence="1">2.7.7.6</ecNumber>
    </recommendedName>
    <alternativeName>
        <fullName evidence="1">RNA polymerase subunit beta'</fullName>
    </alternativeName>
    <alternativeName>
        <fullName evidence="1">Transcriptase subunit beta'</fullName>
    </alternativeName>
</protein>
<keyword id="KW-0240">DNA-directed RNA polymerase</keyword>
<keyword id="KW-0460">Magnesium</keyword>
<keyword id="KW-0479">Metal-binding</keyword>
<keyword id="KW-0548">Nucleotidyltransferase</keyword>
<keyword id="KW-0804">Transcription</keyword>
<keyword id="KW-0808">Transferase</keyword>
<keyword id="KW-0862">Zinc</keyword>
<organism>
    <name type="scientific">Roseiflexus sp. (strain RS-1)</name>
    <dbReference type="NCBI Taxonomy" id="357808"/>
    <lineage>
        <taxon>Bacteria</taxon>
        <taxon>Bacillati</taxon>
        <taxon>Chloroflexota</taxon>
        <taxon>Chloroflexia</taxon>
        <taxon>Chloroflexales</taxon>
        <taxon>Roseiflexineae</taxon>
        <taxon>Roseiflexaceae</taxon>
        <taxon>Roseiflexus</taxon>
    </lineage>
</organism>